<dbReference type="EMBL" id="CP000023">
    <property type="protein sequence ID" value="AAV60243.1"/>
    <property type="status" value="ALT_INIT"/>
    <property type="molecule type" value="Genomic_DNA"/>
</dbReference>
<dbReference type="RefSeq" id="WP_011225635.1">
    <property type="nucleotide sequence ID" value="NC_006448.1"/>
</dbReference>
<dbReference type="SMR" id="Q5M5F2"/>
<dbReference type="STRING" id="264199.stu0536"/>
<dbReference type="GeneID" id="66898437"/>
<dbReference type="KEGG" id="stl:stu0536"/>
<dbReference type="eggNOG" id="COG0244">
    <property type="taxonomic scope" value="Bacteria"/>
</dbReference>
<dbReference type="HOGENOM" id="CLU_092227_2_0_9"/>
<dbReference type="Proteomes" id="UP000001170">
    <property type="component" value="Chromosome"/>
</dbReference>
<dbReference type="GO" id="GO:0015934">
    <property type="term" value="C:large ribosomal subunit"/>
    <property type="evidence" value="ECO:0007669"/>
    <property type="project" value="InterPro"/>
</dbReference>
<dbReference type="GO" id="GO:0070180">
    <property type="term" value="F:large ribosomal subunit rRNA binding"/>
    <property type="evidence" value="ECO:0007669"/>
    <property type="project" value="UniProtKB-UniRule"/>
</dbReference>
<dbReference type="GO" id="GO:0003735">
    <property type="term" value="F:structural constituent of ribosome"/>
    <property type="evidence" value="ECO:0007669"/>
    <property type="project" value="InterPro"/>
</dbReference>
<dbReference type="GO" id="GO:0006412">
    <property type="term" value="P:translation"/>
    <property type="evidence" value="ECO:0007669"/>
    <property type="project" value="UniProtKB-UniRule"/>
</dbReference>
<dbReference type="CDD" id="cd05797">
    <property type="entry name" value="Ribosomal_L10"/>
    <property type="match status" value="1"/>
</dbReference>
<dbReference type="FunFam" id="3.30.70.1730:FF:000001">
    <property type="entry name" value="50S ribosomal protein L10"/>
    <property type="match status" value="1"/>
</dbReference>
<dbReference type="Gene3D" id="3.30.70.1730">
    <property type="match status" value="1"/>
</dbReference>
<dbReference type="HAMAP" id="MF_00362">
    <property type="entry name" value="Ribosomal_uL10"/>
    <property type="match status" value="1"/>
</dbReference>
<dbReference type="InterPro" id="IPR001790">
    <property type="entry name" value="Ribosomal_uL10"/>
</dbReference>
<dbReference type="InterPro" id="IPR043141">
    <property type="entry name" value="Ribosomal_uL10-like_sf"/>
</dbReference>
<dbReference type="InterPro" id="IPR022973">
    <property type="entry name" value="Ribosomal_uL10_bac"/>
</dbReference>
<dbReference type="InterPro" id="IPR047865">
    <property type="entry name" value="Ribosomal_uL10_bac_type"/>
</dbReference>
<dbReference type="InterPro" id="IPR002363">
    <property type="entry name" value="Ribosomal_uL10_CS_bac"/>
</dbReference>
<dbReference type="NCBIfam" id="NF000955">
    <property type="entry name" value="PRK00099.1-1"/>
    <property type="match status" value="1"/>
</dbReference>
<dbReference type="PANTHER" id="PTHR11560">
    <property type="entry name" value="39S RIBOSOMAL PROTEIN L10, MITOCHONDRIAL"/>
    <property type="match status" value="1"/>
</dbReference>
<dbReference type="Pfam" id="PF00466">
    <property type="entry name" value="Ribosomal_L10"/>
    <property type="match status" value="1"/>
</dbReference>
<dbReference type="SUPFAM" id="SSF160369">
    <property type="entry name" value="Ribosomal protein L10-like"/>
    <property type="match status" value="1"/>
</dbReference>
<dbReference type="PROSITE" id="PS01109">
    <property type="entry name" value="RIBOSOMAL_L10"/>
    <property type="match status" value="1"/>
</dbReference>
<sequence>MSEAIIAKKAEQVAIVADKMKAAASIVVVDSRGLTVDQDTVLRRNLRESGVEFKVIKNSILSRAAEKAGLEDLKKLFVGPSAVAFSNEDVIAPAKVISEFAKGAEALEIKGGVVDGAITSVEEINALASLPNKEGMLSMLLSVLQAPVRNVAYAVKAVAESKEDGAA</sequence>
<protein>
    <recommendedName>
        <fullName evidence="1">Large ribosomal subunit protein uL10</fullName>
    </recommendedName>
    <alternativeName>
        <fullName evidence="2">50S ribosomal protein L10</fullName>
    </alternativeName>
</protein>
<keyword id="KW-1185">Reference proteome</keyword>
<keyword id="KW-0687">Ribonucleoprotein</keyword>
<keyword id="KW-0689">Ribosomal protein</keyword>
<keyword id="KW-0694">RNA-binding</keyword>
<keyword id="KW-0699">rRNA-binding</keyword>
<organism>
    <name type="scientific">Streptococcus thermophilus (strain ATCC BAA-250 / LMG 18311)</name>
    <dbReference type="NCBI Taxonomy" id="264199"/>
    <lineage>
        <taxon>Bacteria</taxon>
        <taxon>Bacillati</taxon>
        <taxon>Bacillota</taxon>
        <taxon>Bacilli</taxon>
        <taxon>Lactobacillales</taxon>
        <taxon>Streptococcaceae</taxon>
        <taxon>Streptococcus</taxon>
    </lineage>
</organism>
<feature type="chain" id="PRO_0000234894" description="Large ribosomal subunit protein uL10">
    <location>
        <begin position="1"/>
        <end position="167"/>
    </location>
</feature>
<proteinExistence type="inferred from homology"/>
<comment type="function">
    <text evidence="1">Forms part of the ribosomal stalk, playing a central role in the interaction of the ribosome with GTP-bound translation factors.</text>
</comment>
<comment type="subunit">
    <text evidence="1">Part of the ribosomal stalk of the 50S ribosomal subunit. The N-terminus interacts with L11 and the large rRNA to form the base of the stalk. The C-terminus forms an elongated spine to which L12 dimers bind in a sequential fashion forming a multimeric L10(L12)X complex.</text>
</comment>
<comment type="similarity">
    <text evidence="1">Belongs to the universal ribosomal protein uL10 family.</text>
</comment>
<comment type="sequence caution" evidence="2">
    <conflict type="erroneous initiation">
        <sequence resource="EMBL-CDS" id="AAV60243"/>
    </conflict>
</comment>
<name>RL10_STRT2</name>
<evidence type="ECO:0000255" key="1">
    <source>
        <dbReference type="HAMAP-Rule" id="MF_00362"/>
    </source>
</evidence>
<evidence type="ECO:0000305" key="2"/>
<accession>Q5M5F2</accession>
<reference key="1">
    <citation type="journal article" date="2004" name="Nat. Biotechnol.">
        <title>Complete sequence and comparative genome analysis of the dairy bacterium Streptococcus thermophilus.</title>
        <authorList>
            <person name="Bolotin A."/>
            <person name="Quinquis B."/>
            <person name="Renault P."/>
            <person name="Sorokin A."/>
            <person name="Ehrlich S.D."/>
            <person name="Kulakauskas S."/>
            <person name="Lapidus A."/>
            <person name="Goltsman E."/>
            <person name="Mazur M."/>
            <person name="Pusch G.D."/>
            <person name="Fonstein M."/>
            <person name="Overbeek R."/>
            <person name="Kyprides N."/>
            <person name="Purnelle B."/>
            <person name="Prozzi D."/>
            <person name="Ngui K."/>
            <person name="Masuy D."/>
            <person name="Hancy F."/>
            <person name="Burteau S."/>
            <person name="Boutry M."/>
            <person name="Delcour J."/>
            <person name="Goffeau A."/>
            <person name="Hols P."/>
        </authorList>
    </citation>
    <scope>NUCLEOTIDE SEQUENCE [LARGE SCALE GENOMIC DNA]</scope>
    <source>
        <strain>ATCC BAA-250 / LMG 18311</strain>
    </source>
</reference>
<gene>
    <name evidence="1" type="primary">rplJ</name>
    <name type="ordered locus">stu0536</name>
</gene>